<reference key="1">
    <citation type="journal article" date="2013" name="Stand. Genomic Sci.">
        <title>Complete genome sequence of Arthrobacter sp. strain FB24.</title>
        <authorList>
            <person name="Nakatsu C.H."/>
            <person name="Barabote R."/>
            <person name="Thompson S."/>
            <person name="Bruce D."/>
            <person name="Detter C."/>
            <person name="Brettin T."/>
            <person name="Han C."/>
            <person name="Beasley F."/>
            <person name="Chen W."/>
            <person name="Konopka A."/>
            <person name="Xie G."/>
        </authorList>
    </citation>
    <scope>NUCLEOTIDE SEQUENCE [LARGE SCALE GENOMIC DNA]</scope>
    <source>
        <strain>FB24</strain>
    </source>
</reference>
<protein>
    <recommendedName>
        <fullName evidence="1">Glucose-1-phosphate adenylyltransferase</fullName>
        <ecNumber evidence="1">2.7.7.27</ecNumber>
    </recommendedName>
    <alternativeName>
        <fullName evidence="1">ADP-glucose pyrophosphorylase</fullName>
        <shortName evidence="1">ADPGlc PPase</shortName>
    </alternativeName>
    <alternativeName>
        <fullName evidence="1">ADP-glucose synthase</fullName>
    </alternativeName>
</protein>
<proteinExistence type="inferred from homology"/>
<keyword id="KW-0067">ATP-binding</keyword>
<keyword id="KW-0119">Carbohydrate metabolism</keyword>
<keyword id="KW-0320">Glycogen biosynthesis</keyword>
<keyword id="KW-0321">Glycogen metabolism</keyword>
<keyword id="KW-0547">Nucleotide-binding</keyword>
<keyword id="KW-0548">Nucleotidyltransferase</keyword>
<keyword id="KW-1185">Reference proteome</keyword>
<keyword id="KW-0808">Transferase</keyword>
<organism>
    <name type="scientific">Arthrobacter sp. (strain FB24)</name>
    <dbReference type="NCBI Taxonomy" id="290399"/>
    <lineage>
        <taxon>Bacteria</taxon>
        <taxon>Bacillati</taxon>
        <taxon>Actinomycetota</taxon>
        <taxon>Actinomycetes</taxon>
        <taxon>Micrococcales</taxon>
        <taxon>Micrococcaceae</taxon>
        <taxon>Arthrobacter</taxon>
    </lineage>
</organism>
<dbReference type="EC" id="2.7.7.27" evidence="1"/>
<dbReference type="EMBL" id="CP000454">
    <property type="protein sequence ID" value="ABK03520.1"/>
    <property type="molecule type" value="Genomic_DNA"/>
</dbReference>
<dbReference type="RefSeq" id="WP_011691986.1">
    <property type="nucleotide sequence ID" value="NC_008541.1"/>
</dbReference>
<dbReference type="SMR" id="A0JWV0"/>
<dbReference type="STRING" id="290399.Arth_2140"/>
<dbReference type="KEGG" id="art:Arth_2140"/>
<dbReference type="eggNOG" id="COG0448">
    <property type="taxonomic scope" value="Bacteria"/>
</dbReference>
<dbReference type="HOGENOM" id="CLU_029499_14_1_11"/>
<dbReference type="OrthoDB" id="9801810at2"/>
<dbReference type="UniPathway" id="UPA00164"/>
<dbReference type="Proteomes" id="UP000000754">
    <property type="component" value="Chromosome"/>
</dbReference>
<dbReference type="GO" id="GO:0005524">
    <property type="term" value="F:ATP binding"/>
    <property type="evidence" value="ECO:0007669"/>
    <property type="project" value="UniProtKB-KW"/>
</dbReference>
<dbReference type="GO" id="GO:0008878">
    <property type="term" value="F:glucose-1-phosphate adenylyltransferase activity"/>
    <property type="evidence" value="ECO:0007669"/>
    <property type="project" value="UniProtKB-UniRule"/>
</dbReference>
<dbReference type="GO" id="GO:0005978">
    <property type="term" value="P:glycogen biosynthetic process"/>
    <property type="evidence" value="ECO:0007669"/>
    <property type="project" value="UniProtKB-UniRule"/>
</dbReference>
<dbReference type="CDD" id="cd02508">
    <property type="entry name" value="ADP_Glucose_PP"/>
    <property type="match status" value="1"/>
</dbReference>
<dbReference type="CDD" id="cd04651">
    <property type="entry name" value="LbH_G1P_AT_C"/>
    <property type="match status" value="1"/>
</dbReference>
<dbReference type="Gene3D" id="2.160.10.10">
    <property type="entry name" value="Hexapeptide repeat proteins"/>
    <property type="match status" value="1"/>
</dbReference>
<dbReference type="Gene3D" id="3.90.550.10">
    <property type="entry name" value="Spore Coat Polysaccharide Biosynthesis Protein SpsA, Chain A"/>
    <property type="match status" value="1"/>
</dbReference>
<dbReference type="HAMAP" id="MF_00624">
    <property type="entry name" value="GlgC"/>
    <property type="match status" value="1"/>
</dbReference>
<dbReference type="InterPro" id="IPR011831">
    <property type="entry name" value="ADP-Glc_PPase"/>
</dbReference>
<dbReference type="InterPro" id="IPR005836">
    <property type="entry name" value="ADP_Glu_pyroP_CS"/>
</dbReference>
<dbReference type="InterPro" id="IPR023049">
    <property type="entry name" value="GlgC_bac"/>
</dbReference>
<dbReference type="InterPro" id="IPR056818">
    <property type="entry name" value="GlmU/GlgC-like_hexapep"/>
</dbReference>
<dbReference type="InterPro" id="IPR005835">
    <property type="entry name" value="NTP_transferase_dom"/>
</dbReference>
<dbReference type="InterPro" id="IPR029044">
    <property type="entry name" value="Nucleotide-diphossugar_trans"/>
</dbReference>
<dbReference type="InterPro" id="IPR011004">
    <property type="entry name" value="Trimer_LpxA-like_sf"/>
</dbReference>
<dbReference type="NCBIfam" id="TIGR02091">
    <property type="entry name" value="glgC"/>
    <property type="match status" value="1"/>
</dbReference>
<dbReference type="NCBIfam" id="NF001947">
    <property type="entry name" value="PRK00725.1"/>
    <property type="match status" value="1"/>
</dbReference>
<dbReference type="NCBIfam" id="NF002023">
    <property type="entry name" value="PRK00844.1"/>
    <property type="match status" value="1"/>
</dbReference>
<dbReference type="PANTHER" id="PTHR43523:SF2">
    <property type="entry name" value="GLUCOSE-1-PHOSPHATE ADENYLYLTRANSFERASE"/>
    <property type="match status" value="1"/>
</dbReference>
<dbReference type="PANTHER" id="PTHR43523">
    <property type="entry name" value="GLUCOSE-1-PHOSPHATE ADENYLYLTRANSFERASE-RELATED"/>
    <property type="match status" value="1"/>
</dbReference>
<dbReference type="Pfam" id="PF24894">
    <property type="entry name" value="Hexapep_GlmU"/>
    <property type="match status" value="1"/>
</dbReference>
<dbReference type="Pfam" id="PF00483">
    <property type="entry name" value="NTP_transferase"/>
    <property type="match status" value="1"/>
</dbReference>
<dbReference type="SUPFAM" id="SSF53448">
    <property type="entry name" value="Nucleotide-diphospho-sugar transferases"/>
    <property type="match status" value="1"/>
</dbReference>
<dbReference type="SUPFAM" id="SSF51161">
    <property type="entry name" value="Trimeric LpxA-like enzymes"/>
    <property type="match status" value="1"/>
</dbReference>
<dbReference type="PROSITE" id="PS00809">
    <property type="entry name" value="ADP_GLC_PYROPHOSPH_2"/>
    <property type="match status" value="1"/>
</dbReference>
<dbReference type="PROSITE" id="PS00810">
    <property type="entry name" value="ADP_GLC_PYROPHOSPH_3"/>
    <property type="match status" value="1"/>
</dbReference>
<gene>
    <name evidence="1" type="primary">glgC</name>
    <name type="ordered locus">Arth_2140</name>
</gene>
<feature type="chain" id="PRO_1000051557" description="Glucose-1-phosphate adenylyltransferase">
    <location>
        <begin position="1"/>
        <end position="465"/>
    </location>
</feature>
<feature type="binding site" evidence="1">
    <location>
        <position position="164"/>
    </location>
    <ligand>
        <name>alpha-D-glucose 1-phosphate</name>
        <dbReference type="ChEBI" id="CHEBI:58601"/>
    </ligand>
</feature>
<feature type="binding site" evidence="1">
    <location>
        <begin position="181"/>
        <end position="182"/>
    </location>
    <ligand>
        <name>alpha-D-glucose 1-phosphate</name>
        <dbReference type="ChEBI" id="CHEBI:58601"/>
    </ligand>
</feature>
<feature type="binding site" evidence="1">
    <location>
        <position position="199"/>
    </location>
    <ligand>
        <name>alpha-D-glucose 1-phosphate</name>
        <dbReference type="ChEBI" id="CHEBI:58601"/>
    </ligand>
</feature>
<comment type="function">
    <text evidence="1">Involved in the biosynthesis of ADP-glucose, a building block required for the elongation reactions to produce glycogen. Catalyzes the reaction between ATP and alpha-D-glucose 1-phosphate (G1P) to produce pyrophosphate and ADP-Glc.</text>
</comment>
<comment type="catalytic activity">
    <reaction evidence="1">
        <text>alpha-D-glucose 1-phosphate + ATP + H(+) = ADP-alpha-D-glucose + diphosphate</text>
        <dbReference type="Rhea" id="RHEA:12120"/>
        <dbReference type="ChEBI" id="CHEBI:15378"/>
        <dbReference type="ChEBI" id="CHEBI:30616"/>
        <dbReference type="ChEBI" id="CHEBI:33019"/>
        <dbReference type="ChEBI" id="CHEBI:57498"/>
        <dbReference type="ChEBI" id="CHEBI:58601"/>
        <dbReference type="EC" id="2.7.7.27"/>
    </reaction>
</comment>
<comment type="pathway">
    <text evidence="1">Glycan biosynthesis; glycogen biosynthesis.</text>
</comment>
<comment type="subunit">
    <text evidence="1">Homotetramer.</text>
</comment>
<comment type="similarity">
    <text evidence="1">Belongs to the bacterial/plant glucose-1-phosphate adenylyltransferase family.</text>
</comment>
<name>GLGC_ARTS2</name>
<accession>A0JWV0</accession>
<sequence length="465" mass="49863">MPLNKKVLAIVLAGGEGNRLMPLTADRAKPGVPFAGSYRLIDFALSNLVNSRYLQIVVLTQYKSHSLDRHISETWRMSTQLGNYIASVPAQQRVGKSWFLGSANAIYQSLNLIHDANPDIVVVVGADHVYRMDFAQMVEQHVASGAKATVAAVRQPLNMADQFGVIEVDQENPQKIAAFVEKPSSTPGLAADPTQFLASMGNYVFDADALVDALHVDAERLDTKHDMGGDIIPYFVNKGEAGVYDFTLNDIPGSTERDRTYWRDVGTIDSFYDAHMDLISPMPVFNLYNSEWPIYTRQSISPPAKFVRGQGNTVGTALDSIVASGVVISGGIVEGSVLSNDVYVGTASRVVDSVLMDKVQIGEGAVVNRAIIDKNVKVPAGAAIGLDPERDRARGFKVTESGITVLSKGQAVPEPDEAERALSAANLHLVPNAIKAATENYPAARDSAAKVGEAHAAAVGVSSND</sequence>
<evidence type="ECO:0000255" key="1">
    <source>
        <dbReference type="HAMAP-Rule" id="MF_00624"/>
    </source>
</evidence>